<proteinExistence type="inferred from homology"/>
<name>RPOA_CYAPA</name>
<sequence length="315" mass="35666">MTQFQIECVESKVESSCNQYGRFIVEPLEPGQGITIGNSLRRVLLSDIEGSAITAVRIAGVNHEFCSIPGVKEDVLELLLNLKNIVLKSYTNEPQIGRLKIQGACKVTTANFELPSEVEIIHGTQYVATVAENAILEMEFKIEKGRGYKIIDKKQTENSIDFLPIDAIFMPVRKVNYMVEEIFLRNSEIKERLILEIWRNGSVTPQDSISQAAEVLLNLFNPFKKINFENTDDSTEQTEDKISQIPIEELQLSVRAYNCLKRAQIHSIGDLLNVSQEELLEIRNFGQKSAKEVIDALQKRLGISLPKRKTNKKEN</sequence>
<geneLocation type="cyanelle"/>
<accession>P48118</accession>
<organism>
    <name type="scientific">Cyanophora paradoxa</name>
    <dbReference type="NCBI Taxonomy" id="2762"/>
    <lineage>
        <taxon>Eukaryota</taxon>
        <taxon>Glaucocystophyceae</taxon>
        <taxon>Cyanophoraceae</taxon>
        <taxon>Cyanophora</taxon>
    </lineage>
</organism>
<keyword id="KW-0194">Cyanelle</keyword>
<keyword id="KW-0240">DNA-directed RNA polymerase</keyword>
<keyword id="KW-0548">Nucleotidyltransferase</keyword>
<keyword id="KW-0934">Plastid</keyword>
<keyword id="KW-0804">Transcription</keyword>
<keyword id="KW-0808">Transferase</keyword>
<comment type="function">
    <text evidence="1">DNA-dependent RNA polymerase catalyzes the transcription of DNA into RNA using the four ribonucleoside triphosphates as substrates.</text>
</comment>
<comment type="catalytic activity">
    <reaction evidence="1">
        <text>RNA(n) + a ribonucleoside 5'-triphosphate = RNA(n+1) + diphosphate</text>
        <dbReference type="Rhea" id="RHEA:21248"/>
        <dbReference type="Rhea" id="RHEA-COMP:14527"/>
        <dbReference type="Rhea" id="RHEA-COMP:17342"/>
        <dbReference type="ChEBI" id="CHEBI:33019"/>
        <dbReference type="ChEBI" id="CHEBI:61557"/>
        <dbReference type="ChEBI" id="CHEBI:140395"/>
        <dbReference type="EC" id="2.7.7.6"/>
    </reaction>
</comment>
<comment type="subunit">
    <text evidence="1">In plastids the minimal PEP RNA polymerase catalytic core is composed of four subunits: alpha, beta, beta', and beta''. When a (nuclear-encoded) sigma factor is associated with the core the holoenzyme is formed, which can initiate transcription.</text>
</comment>
<comment type="subcellular location">
    <subcellularLocation>
        <location>Plastid</location>
        <location>Cyanelle</location>
    </subcellularLocation>
</comment>
<comment type="domain">
    <text evidence="1">The N-terminal domain is essential for RNAP assembly and basal transcription, whereas the C-terminal domain is involved in interaction with transcriptional regulators and with upstream promoter elements.</text>
</comment>
<comment type="similarity">
    <text evidence="1">Belongs to the RNA polymerase alpha chain family.</text>
</comment>
<dbReference type="EC" id="2.7.7.6" evidence="1"/>
<dbReference type="EMBL" id="U30821">
    <property type="protein sequence ID" value="AAA81287.1"/>
    <property type="molecule type" value="Genomic_DNA"/>
</dbReference>
<dbReference type="PIR" id="T06944">
    <property type="entry name" value="T06944"/>
</dbReference>
<dbReference type="RefSeq" id="NP_043256.1">
    <property type="nucleotide sequence ID" value="NC_001675.1"/>
</dbReference>
<dbReference type="SMR" id="P48118"/>
<dbReference type="GeneID" id="801677"/>
<dbReference type="GO" id="GO:0009842">
    <property type="term" value="C:cyanelle"/>
    <property type="evidence" value="ECO:0007669"/>
    <property type="project" value="UniProtKB-SubCell"/>
</dbReference>
<dbReference type="GO" id="GO:0000428">
    <property type="term" value="C:DNA-directed RNA polymerase complex"/>
    <property type="evidence" value="ECO:0007669"/>
    <property type="project" value="UniProtKB-KW"/>
</dbReference>
<dbReference type="GO" id="GO:0005739">
    <property type="term" value="C:mitochondrion"/>
    <property type="evidence" value="ECO:0007669"/>
    <property type="project" value="GOC"/>
</dbReference>
<dbReference type="GO" id="GO:0003677">
    <property type="term" value="F:DNA binding"/>
    <property type="evidence" value="ECO:0007669"/>
    <property type="project" value="UniProtKB-UniRule"/>
</dbReference>
<dbReference type="GO" id="GO:0003899">
    <property type="term" value="F:DNA-directed RNA polymerase activity"/>
    <property type="evidence" value="ECO:0007669"/>
    <property type="project" value="UniProtKB-UniRule"/>
</dbReference>
<dbReference type="GO" id="GO:0046983">
    <property type="term" value="F:protein dimerization activity"/>
    <property type="evidence" value="ECO:0007669"/>
    <property type="project" value="InterPro"/>
</dbReference>
<dbReference type="GO" id="GO:0006351">
    <property type="term" value="P:DNA-templated transcription"/>
    <property type="evidence" value="ECO:0007669"/>
    <property type="project" value="UniProtKB-UniRule"/>
</dbReference>
<dbReference type="CDD" id="cd06928">
    <property type="entry name" value="RNAP_alpha_NTD"/>
    <property type="match status" value="1"/>
</dbReference>
<dbReference type="FunFam" id="2.170.120.12:FF:000001">
    <property type="entry name" value="DNA-directed RNA polymerase subunit alpha"/>
    <property type="match status" value="1"/>
</dbReference>
<dbReference type="Gene3D" id="1.10.150.20">
    <property type="entry name" value="5' to 3' exonuclease, C-terminal subdomain"/>
    <property type="match status" value="1"/>
</dbReference>
<dbReference type="Gene3D" id="2.170.120.12">
    <property type="entry name" value="DNA-directed RNA polymerase, insert domain"/>
    <property type="match status" value="1"/>
</dbReference>
<dbReference type="Gene3D" id="3.30.1360.10">
    <property type="entry name" value="RNA polymerase, RBP11-like subunit"/>
    <property type="match status" value="1"/>
</dbReference>
<dbReference type="HAMAP" id="MF_00059">
    <property type="entry name" value="RNApol_bact_RpoA"/>
    <property type="match status" value="1"/>
</dbReference>
<dbReference type="InterPro" id="IPR011262">
    <property type="entry name" value="DNA-dir_RNA_pol_insert"/>
</dbReference>
<dbReference type="InterPro" id="IPR011263">
    <property type="entry name" value="DNA-dir_RNA_pol_RpoA/D/Rpb3"/>
</dbReference>
<dbReference type="InterPro" id="IPR011773">
    <property type="entry name" value="DNA-dir_RpoA"/>
</dbReference>
<dbReference type="InterPro" id="IPR036603">
    <property type="entry name" value="RBP11-like"/>
</dbReference>
<dbReference type="InterPro" id="IPR011260">
    <property type="entry name" value="RNAP_asu_C"/>
</dbReference>
<dbReference type="InterPro" id="IPR036643">
    <property type="entry name" value="RNApol_insert_sf"/>
</dbReference>
<dbReference type="NCBIfam" id="NF003516">
    <property type="entry name" value="PRK05182.2-2"/>
    <property type="match status" value="1"/>
</dbReference>
<dbReference type="NCBIfam" id="NF003519">
    <property type="entry name" value="PRK05182.2-5"/>
    <property type="match status" value="1"/>
</dbReference>
<dbReference type="NCBIfam" id="TIGR02027">
    <property type="entry name" value="rpoA"/>
    <property type="match status" value="1"/>
</dbReference>
<dbReference type="Pfam" id="PF01000">
    <property type="entry name" value="RNA_pol_A_bac"/>
    <property type="match status" value="1"/>
</dbReference>
<dbReference type="Pfam" id="PF03118">
    <property type="entry name" value="RNA_pol_A_CTD"/>
    <property type="match status" value="1"/>
</dbReference>
<dbReference type="Pfam" id="PF01193">
    <property type="entry name" value="RNA_pol_L"/>
    <property type="match status" value="1"/>
</dbReference>
<dbReference type="SMART" id="SM00662">
    <property type="entry name" value="RPOLD"/>
    <property type="match status" value="1"/>
</dbReference>
<dbReference type="SUPFAM" id="SSF47789">
    <property type="entry name" value="C-terminal domain of RNA polymerase alpha subunit"/>
    <property type="match status" value="1"/>
</dbReference>
<dbReference type="SUPFAM" id="SSF56553">
    <property type="entry name" value="Insert subdomain of RNA polymerase alpha subunit"/>
    <property type="match status" value="1"/>
</dbReference>
<dbReference type="SUPFAM" id="SSF55257">
    <property type="entry name" value="RBP11-like subunits of RNA polymerase"/>
    <property type="match status" value="1"/>
</dbReference>
<gene>
    <name evidence="1" type="primary">rpoA</name>
</gene>
<reference key="1">
    <citation type="journal article" date="1995" name="Plant Mol. Biol. Rep.">
        <title>Nucleotide sequence of the cyanelle DNA from Cyanophora paradoxa.</title>
        <authorList>
            <person name="Stirewalt V.L."/>
            <person name="Michalowski C.B."/>
            <person name="Loeffelhardt W."/>
            <person name="Bohnert H.J."/>
            <person name="Bryant D.A."/>
        </authorList>
    </citation>
    <scope>NUCLEOTIDE SEQUENCE [LARGE SCALE GENOMIC DNA]</scope>
    <source>
        <strain>UTEX LB 555 / Pringsheim</strain>
    </source>
</reference>
<reference key="2">
    <citation type="book" date="1997" name="Eukaryotism and symbiosis">
        <title>The complete sequence of the cyanelle genome of Cyanophora paradoxa: the genetic complexity of a primitive plastid.</title>
        <editorList>
            <person name="Schenk H.E.A."/>
            <person name="Herrmann R."/>
            <person name="Jeon K.W."/>
            <person name="Mueller N.E."/>
            <person name="Schwemmler W."/>
        </editorList>
        <authorList>
            <person name="Loeffelhardt W."/>
            <person name="Stirewalt V.L."/>
            <person name="Michalowski C.B."/>
            <person name="Annarella M."/>
            <person name="Farley J.Y."/>
            <person name="Schluchter W.M."/>
            <person name="Chung S."/>
            <person name="Newmann-Spallart C."/>
            <person name="Steiner J.M."/>
            <person name="Jakowitsch J."/>
            <person name="Bohnert H.J."/>
            <person name="Bryant D.A."/>
        </authorList>
    </citation>
    <scope>NUCLEOTIDE SEQUENCE [LARGE SCALE GENOMIC DNA]</scope>
    <source>
        <strain>UTEX LB 555 / Pringsheim</strain>
    </source>
</reference>
<protein>
    <recommendedName>
        <fullName evidence="1">DNA-directed RNA polymerase subunit alpha</fullName>
        <shortName evidence="1">PEP</shortName>
        <ecNumber evidence="1">2.7.7.6</ecNumber>
    </recommendedName>
    <alternativeName>
        <fullName evidence="1">Plastid-encoded RNA polymerase subunit alpha</fullName>
        <shortName evidence="1">RNA polymerase subunit alpha</shortName>
    </alternativeName>
</protein>
<feature type="chain" id="PRO_0000175430" description="DNA-directed RNA polymerase subunit alpha">
    <location>
        <begin position="1"/>
        <end position="315"/>
    </location>
</feature>
<feature type="region of interest" description="Alpha N-terminal domain (alpha-NTD)" evidence="1">
    <location>
        <begin position="1"/>
        <end position="227"/>
    </location>
</feature>
<feature type="region of interest" description="Alpha C-terminal domain (alpha-CTD)" evidence="1">
    <location>
        <begin position="239"/>
        <end position="315"/>
    </location>
</feature>
<evidence type="ECO:0000255" key="1">
    <source>
        <dbReference type="HAMAP-Rule" id="MF_00059"/>
    </source>
</evidence>